<sequence>MGKPTFQPNNRKRKKNHGFRARMATKNGRKVLARRRQKGRKVLSA</sequence>
<proteinExistence type="inferred from homology"/>
<feature type="chain" id="PRO_0000187339" description="Large ribosomal subunit protein bL34">
    <location>
        <begin position="1"/>
        <end position="45"/>
    </location>
</feature>
<feature type="region of interest" description="Disordered" evidence="2">
    <location>
        <begin position="1"/>
        <end position="45"/>
    </location>
</feature>
<feature type="compositionally biased region" description="Basic residues" evidence="2">
    <location>
        <begin position="10"/>
        <end position="20"/>
    </location>
</feature>
<feature type="compositionally biased region" description="Basic residues" evidence="2">
    <location>
        <begin position="27"/>
        <end position="45"/>
    </location>
</feature>
<evidence type="ECO:0000255" key="1">
    <source>
        <dbReference type="HAMAP-Rule" id="MF_00391"/>
    </source>
</evidence>
<evidence type="ECO:0000256" key="2">
    <source>
        <dbReference type="SAM" id="MobiDB-lite"/>
    </source>
</evidence>
<evidence type="ECO:0000305" key="3"/>
<organism>
    <name type="scientific">Shouchella clausii (strain KSM-K16)</name>
    <name type="common">Alkalihalobacillus clausii</name>
    <dbReference type="NCBI Taxonomy" id="66692"/>
    <lineage>
        <taxon>Bacteria</taxon>
        <taxon>Bacillati</taxon>
        <taxon>Bacillota</taxon>
        <taxon>Bacilli</taxon>
        <taxon>Bacillales</taxon>
        <taxon>Bacillaceae</taxon>
        <taxon>Shouchella</taxon>
    </lineage>
</organism>
<protein>
    <recommendedName>
        <fullName evidence="1">Large ribosomal subunit protein bL34</fullName>
    </recommendedName>
    <alternativeName>
        <fullName evidence="3">50S ribosomal protein L34</fullName>
    </alternativeName>
</protein>
<reference key="1">
    <citation type="submission" date="2003-10" db="EMBL/GenBank/DDBJ databases">
        <title>The complete genome sequence of the alkaliphilic Bacillus clausii KSM-K16.</title>
        <authorList>
            <person name="Takaki Y."/>
            <person name="Kageyama Y."/>
            <person name="Shimamura S."/>
            <person name="Suzuki H."/>
            <person name="Nishi S."/>
            <person name="Hatada Y."/>
            <person name="Kawai S."/>
            <person name="Ito S."/>
            <person name="Horikoshi K."/>
        </authorList>
    </citation>
    <scope>NUCLEOTIDE SEQUENCE [LARGE SCALE GENOMIC DNA]</scope>
    <source>
        <strain>KSM-K16</strain>
    </source>
</reference>
<gene>
    <name evidence="1" type="primary">rpmH</name>
    <name type="ordered locus">ABC4121</name>
</gene>
<comment type="similarity">
    <text evidence="1">Belongs to the bacterial ribosomal protein bL34 family.</text>
</comment>
<accession>Q5WAF9</accession>
<keyword id="KW-1185">Reference proteome</keyword>
<keyword id="KW-0687">Ribonucleoprotein</keyword>
<keyword id="KW-0689">Ribosomal protein</keyword>
<dbReference type="EMBL" id="AP006627">
    <property type="protein sequence ID" value="BAD66652.1"/>
    <property type="molecule type" value="Genomic_DNA"/>
</dbReference>
<dbReference type="RefSeq" id="WP_011248954.1">
    <property type="nucleotide sequence ID" value="NC_006582.1"/>
</dbReference>
<dbReference type="SMR" id="Q5WAF9"/>
<dbReference type="STRING" id="66692.ABC4121"/>
<dbReference type="KEGG" id="bcl:ABC4121"/>
<dbReference type="eggNOG" id="COG0230">
    <property type="taxonomic scope" value="Bacteria"/>
</dbReference>
<dbReference type="HOGENOM" id="CLU_129938_2_0_9"/>
<dbReference type="OrthoDB" id="9804164at2"/>
<dbReference type="Proteomes" id="UP000001168">
    <property type="component" value="Chromosome"/>
</dbReference>
<dbReference type="GO" id="GO:1990904">
    <property type="term" value="C:ribonucleoprotein complex"/>
    <property type="evidence" value="ECO:0007669"/>
    <property type="project" value="UniProtKB-KW"/>
</dbReference>
<dbReference type="GO" id="GO:0005840">
    <property type="term" value="C:ribosome"/>
    <property type="evidence" value="ECO:0007669"/>
    <property type="project" value="UniProtKB-KW"/>
</dbReference>
<dbReference type="GO" id="GO:0003735">
    <property type="term" value="F:structural constituent of ribosome"/>
    <property type="evidence" value="ECO:0007669"/>
    <property type="project" value="InterPro"/>
</dbReference>
<dbReference type="GO" id="GO:0006412">
    <property type="term" value="P:translation"/>
    <property type="evidence" value="ECO:0007669"/>
    <property type="project" value="UniProtKB-UniRule"/>
</dbReference>
<dbReference type="FunFam" id="1.10.287.3980:FF:000001">
    <property type="entry name" value="Mitochondrial ribosomal protein L34"/>
    <property type="match status" value="1"/>
</dbReference>
<dbReference type="Gene3D" id="1.10.287.3980">
    <property type="match status" value="1"/>
</dbReference>
<dbReference type="HAMAP" id="MF_00391">
    <property type="entry name" value="Ribosomal_bL34"/>
    <property type="match status" value="1"/>
</dbReference>
<dbReference type="InterPro" id="IPR000271">
    <property type="entry name" value="Ribosomal_bL34"/>
</dbReference>
<dbReference type="InterPro" id="IPR020939">
    <property type="entry name" value="Ribosomal_bL34_CS"/>
</dbReference>
<dbReference type="NCBIfam" id="TIGR01030">
    <property type="entry name" value="rpmH_bact"/>
    <property type="match status" value="1"/>
</dbReference>
<dbReference type="PANTHER" id="PTHR14503:SF4">
    <property type="entry name" value="LARGE RIBOSOMAL SUBUNIT PROTEIN BL34M"/>
    <property type="match status" value="1"/>
</dbReference>
<dbReference type="PANTHER" id="PTHR14503">
    <property type="entry name" value="MITOCHONDRIAL RIBOSOMAL PROTEIN 34 FAMILY MEMBER"/>
    <property type="match status" value="1"/>
</dbReference>
<dbReference type="Pfam" id="PF00468">
    <property type="entry name" value="Ribosomal_L34"/>
    <property type="match status" value="1"/>
</dbReference>
<dbReference type="PROSITE" id="PS00784">
    <property type="entry name" value="RIBOSOMAL_L34"/>
    <property type="match status" value="1"/>
</dbReference>
<name>RL34_SHOC1</name>